<sequence length="460" mass="49716">MSNYAIILAAGKGTRMKSDLPKVLHKVSGITMLEHVFRAVSVIEPAKNVTVIGHKAELVREVLDGQSAFTMQTEQLGTGHAVMMAEEELAGLEGQTLVIAGDTPLITGESLKNLIDFHVNHKNVATILTATADNPFGYGRIIRNENGEVTKIVEQKDANKFEQQVKEINTGTYVFDNKRLFEALKNINTNNAQGEYYLTDVISIFRENGEKVGAYTLRDFEESLGVNDRVALATAEDVMRRRINKTHMINGVTFQNPNATYIDVDVEIAPDVVIEANVTLKGKTKVGAESVLTNGTYIVDSTIGANTVITNSMIEHSVVEKGATVGPFAHIRPDSMLKEGVHIGNFVEVKGSTIGENTKAGHLTYIGNAEVGSDVNFGAGTITVNYDGQHKFKTQIANNAFIGSNSTLIAPLEIGDNALTAAGSTITDNVPADSVAIGRSRQVNKEGYAIKKPHHPSQQK</sequence>
<keyword id="KW-0012">Acyltransferase</keyword>
<keyword id="KW-0133">Cell shape</keyword>
<keyword id="KW-0961">Cell wall biogenesis/degradation</keyword>
<keyword id="KW-0963">Cytoplasm</keyword>
<keyword id="KW-0460">Magnesium</keyword>
<keyword id="KW-0479">Metal-binding</keyword>
<keyword id="KW-0511">Multifunctional enzyme</keyword>
<keyword id="KW-0548">Nucleotidyltransferase</keyword>
<keyword id="KW-0573">Peptidoglycan synthesis</keyword>
<keyword id="KW-0677">Repeat</keyword>
<keyword id="KW-0808">Transferase</keyword>
<accession>Q03LQ1</accession>
<reference key="1">
    <citation type="journal article" date="2006" name="Proc. Natl. Acad. Sci. U.S.A.">
        <title>Comparative genomics of the lactic acid bacteria.</title>
        <authorList>
            <person name="Makarova K.S."/>
            <person name="Slesarev A."/>
            <person name="Wolf Y.I."/>
            <person name="Sorokin A."/>
            <person name="Mirkin B."/>
            <person name="Koonin E.V."/>
            <person name="Pavlov A."/>
            <person name="Pavlova N."/>
            <person name="Karamychev V."/>
            <person name="Polouchine N."/>
            <person name="Shakhova V."/>
            <person name="Grigoriev I."/>
            <person name="Lou Y."/>
            <person name="Rohksar D."/>
            <person name="Lucas S."/>
            <person name="Huang K."/>
            <person name="Goodstein D.M."/>
            <person name="Hawkins T."/>
            <person name="Plengvidhya V."/>
            <person name="Welker D."/>
            <person name="Hughes J."/>
            <person name="Goh Y."/>
            <person name="Benson A."/>
            <person name="Baldwin K."/>
            <person name="Lee J.-H."/>
            <person name="Diaz-Muniz I."/>
            <person name="Dosti B."/>
            <person name="Smeianov V."/>
            <person name="Wechter W."/>
            <person name="Barabote R."/>
            <person name="Lorca G."/>
            <person name="Altermann E."/>
            <person name="Barrangou R."/>
            <person name="Ganesan B."/>
            <person name="Xie Y."/>
            <person name="Rawsthorne H."/>
            <person name="Tamir D."/>
            <person name="Parker C."/>
            <person name="Breidt F."/>
            <person name="Broadbent J.R."/>
            <person name="Hutkins R."/>
            <person name="O'Sullivan D."/>
            <person name="Steele J."/>
            <person name="Unlu G."/>
            <person name="Saier M.H. Jr."/>
            <person name="Klaenhammer T."/>
            <person name="Richardson P."/>
            <person name="Kozyavkin S."/>
            <person name="Weimer B.C."/>
            <person name="Mills D.A."/>
        </authorList>
    </citation>
    <scope>NUCLEOTIDE SEQUENCE [LARGE SCALE GENOMIC DNA]</scope>
    <source>
        <strain>ATCC BAA-491 / LMD-9</strain>
    </source>
</reference>
<feature type="chain" id="PRO_1000056207" description="Bifunctional protein GlmU">
    <location>
        <begin position="1"/>
        <end position="460"/>
    </location>
</feature>
<feature type="region of interest" description="Pyrophosphorylase" evidence="1">
    <location>
        <begin position="1"/>
        <end position="229"/>
    </location>
</feature>
<feature type="region of interest" description="Linker" evidence="1">
    <location>
        <begin position="230"/>
        <end position="250"/>
    </location>
</feature>
<feature type="region of interest" description="N-acetyltransferase" evidence="1">
    <location>
        <begin position="251"/>
        <end position="460"/>
    </location>
</feature>
<feature type="active site" description="Proton acceptor" evidence="1">
    <location>
        <position position="362"/>
    </location>
</feature>
<feature type="binding site" evidence="1">
    <location>
        <begin position="8"/>
        <end position="11"/>
    </location>
    <ligand>
        <name>UDP-N-acetyl-alpha-D-glucosamine</name>
        <dbReference type="ChEBI" id="CHEBI:57705"/>
    </ligand>
</feature>
<feature type="binding site" evidence="1">
    <location>
        <position position="22"/>
    </location>
    <ligand>
        <name>UDP-N-acetyl-alpha-D-glucosamine</name>
        <dbReference type="ChEBI" id="CHEBI:57705"/>
    </ligand>
</feature>
<feature type="binding site" evidence="1">
    <location>
        <position position="72"/>
    </location>
    <ligand>
        <name>UDP-N-acetyl-alpha-D-glucosamine</name>
        <dbReference type="ChEBI" id="CHEBI:57705"/>
    </ligand>
</feature>
<feature type="binding site" evidence="1">
    <location>
        <begin position="77"/>
        <end position="78"/>
    </location>
    <ligand>
        <name>UDP-N-acetyl-alpha-D-glucosamine</name>
        <dbReference type="ChEBI" id="CHEBI:57705"/>
    </ligand>
</feature>
<feature type="binding site" evidence="1">
    <location>
        <position position="102"/>
    </location>
    <ligand>
        <name>Mg(2+)</name>
        <dbReference type="ChEBI" id="CHEBI:18420"/>
    </ligand>
</feature>
<feature type="binding site" evidence="1">
    <location>
        <position position="139"/>
    </location>
    <ligand>
        <name>UDP-N-acetyl-alpha-D-glucosamine</name>
        <dbReference type="ChEBI" id="CHEBI:57705"/>
    </ligand>
</feature>
<feature type="binding site" evidence="1">
    <location>
        <position position="154"/>
    </location>
    <ligand>
        <name>UDP-N-acetyl-alpha-D-glucosamine</name>
        <dbReference type="ChEBI" id="CHEBI:57705"/>
    </ligand>
</feature>
<feature type="binding site" evidence="1">
    <location>
        <position position="169"/>
    </location>
    <ligand>
        <name>UDP-N-acetyl-alpha-D-glucosamine</name>
        <dbReference type="ChEBI" id="CHEBI:57705"/>
    </ligand>
</feature>
<feature type="binding site" evidence="1">
    <location>
        <position position="227"/>
    </location>
    <ligand>
        <name>Mg(2+)</name>
        <dbReference type="ChEBI" id="CHEBI:18420"/>
    </ligand>
</feature>
<feature type="binding site" evidence="1">
    <location>
        <position position="227"/>
    </location>
    <ligand>
        <name>UDP-N-acetyl-alpha-D-glucosamine</name>
        <dbReference type="ChEBI" id="CHEBI:57705"/>
    </ligand>
</feature>
<feature type="binding site" evidence="1">
    <location>
        <position position="332"/>
    </location>
    <ligand>
        <name>UDP-N-acetyl-alpha-D-glucosamine</name>
        <dbReference type="ChEBI" id="CHEBI:57705"/>
    </ligand>
</feature>
<feature type="binding site" evidence="1">
    <location>
        <position position="350"/>
    </location>
    <ligand>
        <name>UDP-N-acetyl-alpha-D-glucosamine</name>
        <dbReference type="ChEBI" id="CHEBI:57705"/>
    </ligand>
</feature>
<feature type="binding site" evidence="1">
    <location>
        <position position="365"/>
    </location>
    <ligand>
        <name>UDP-N-acetyl-alpha-D-glucosamine</name>
        <dbReference type="ChEBI" id="CHEBI:57705"/>
    </ligand>
</feature>
<feature type="binding site" evidence="1">
    <location>
        <position position="376"/>
    </location>
    <ligand>
        <name>UDP-N-acetyl-alpha-D-glucosamine</name>
        <dbReference type="ChEBI" id="CHEBI:57705"/>
    </ligand>
</feature>
<feature type="binding site" evidence="1">
    <location>
        <position position="379"/>
    </location>
    <ligand>
        <name>acetyl-CoA</name>
        <dbReference type="ChEBI" id="CHEBI:57288"/>
    </ligand>
</feature>
<feature type="binding site" evidence="1">
    <location>
        <begin position="385"/>
        <end position="386"/>
    </location>
    <ligand>
        <name>acetyl-CoA</name>
        <dbReference type="ChEBI" id="CHEBI:57288"/>
    </ligand>
</feature>
<feature type="binding site" evidence="1">
    <location>
        <position position="404"/>
    </location>
    <ligand>
        <name>acetyl-CoA</name>
        <dbReference type="ChEBI" id="CHEBI:57288"/>
    </ligand>
</feature>
<feature type="binding site" evidence="1">
    <location>
        <position position="422"/>
    </location>
    <ligand>
        <name>acetyl-CoA</name>
        <dbReference type="ChEBI" id="CHEBI:57288"/>
    </ligand>
</feature>
<feature type="binding site" evidence="1">
    <location>
        <position position="439"/>
    </location>
    <ligand>
        <name>acetyl-CoA</name>
        <dbReference type="ChEBI" id="CHEBI:57288"/>
    </ligand>
</feature>
<organism>
    <name type="scientific">Streptococcus thermophilus (strain ATCC BAA-491 / LMD-9)</name>
    <dbReference type="NCBI Taxonomy" id="322159"/>
    <lineage>
        <taxon>Bacteria</taxon>
        <taxon>Bacillati</taxon>
        <taxon>Bacillota</taxon>
        <taxon>Bacilli</taxon>
        <taxon>Lactobacillales</taxon>
        <taxon>Streptococcaceae</taxon>
        <taxon>Streptococcus</taxon>
    </lineage>
</organism>
<proteinExistence type="inferred from homology"/>
<name>GLMU_STRTD</name>
<dbReference type="EC" id="2.7.7.23" evidence="1"/>
<dbReference type="EC" id="2.3.1.157" evidence="1"/>
<dbReference type="EMBL" id="CP000419">
    <property type="protein sequence ID" value="ABJ65871.1"/>
    <property type="molecule type" value="Genomic_DNA"/>
</dbReference>
<dbReference type="RefSeq" id="WP_011680891.1">
    <property type="nucleotide sequence ID" value="NC_008532.1"/>
</dbReference>
<dbReference type="SMR" id="Q03LQ1"/>
<dbReference type="KEGG" id="ste:STER_0603"/>
<dbReference type="HOGENOM" id="CLU_029499_15_2_9"/>
<dbReference type="UniPathway" id="UPA00113">
    <property type="reaction ID" value="UER00532"/>
</dbReference>
<dbReference type="UniPathway" id="UPA00113">
    <property type="reaction ID" value="UER00533"/>
</dbReference>
<dbReference type="UniPathway" id="UPA00973"/>
<dbReference type="GO" id="GO:0005737">
    <property type="term" value="C:cytoplasm"/>
    <property type="evidence" value="ECO:0007669"/>
    <property type="project" value="UniProtKB-SubCell"/>
</dbReference>
<dbReference type="GO" id="GO:0016020">
    <property type="term" value="C:membrane"/>
    <property type="evidence" value="ECO:0007669"/>
    <property type="project" value="GOC"/>
</dbReference>
<dbReference type="GO" id="GO:0019134">
    <property type="term" value="F:glucosamine-1-phosphate N-acetyltransferase activity"/>
    <property type="evidence" value="ECO:0007669"/>
    <property type="project" value="UniProtKB-UniRule"/>
</dbReference>
<dbReference type="GO" id="GO:0000287">
    <property type="term" value="F:magnesium ion binding"/>
    <property type="evidence" value="ECO:0007669"/>
    <property type="project" value="UniProtKB-UniRule"/>
</dbReference>
<dbReference type="GO" id="GO:0003977">
    <property type="term" value="F:UDP-N-acetylglucosamine diphosphorylase activity"/>
    <property type="evidence" value="ECO:0007669"/>
    <property type="project" value="UniProtKB-UniRule"/>
</dbReference>
<dbReference type="GO" id="GO:0000902">
    <property type="term" value="P:cell morphogenesis"/>
    <property type="evidence" value="ECO:0007669"/>
    <property type="project" value="UniProtKB-UniRule"/>
</dbReference>
<dbReference type="GO" id="GO:0071555">
    <property type="term" value="P:cell wall organization"/>
    <property type="evidence" value="ECO:0007669"/>
    <property type="project" value="UniProtKB-KW"/>
</dbReference>
<dbReference type="GO" id="GO:0009245">
    <property type="term" value="P:lipid A biosynthetic process"/>
    <property type="evidence" value="ECO:0007669"/>
    <property type="project" value="UniProtKB-UniRule"/>
</dbReference>
<dbReference type="GO" id="GO:0009252">
    <property type="term" value="P:peptidoglycan biosynthetic process"/>
    <property type="evidence" value="ECO:0007669"/>
    <property type="project" value="UniProtKB-UniRule"/>
</dbReference>
<dbReference type="GO" id="GO:0008360">
    <property type="term" value="P:regulation of cell shape"/>
    <property type="evidence" value="ECO:0007669"/>
    <property type="project" value="UniProtKB-KW"/>
</dbReference>
<dbReference type="GO" id="GO:0006048">
    <property type="term" value="P:UDP-N-acetylglucosamine biosynthetic process"/>
    <property type="evidence" value="ECO:0007669"/>
    <property type="project" value="UniProtKB-UniPathway"/>
</dbReference>
<dbReference type="CDD" id="cd02540">
    <property type="entry name" value="GT2_GlmU_N_bac"/>
    <property type="match status" value="1"/>
</dbReference>
<dbReference type="CDD" id="cd03353">
    <property type="entry name" value="LbH_GlmU_C"/>
    <property type="match status" value="1"/>
</dbReference>
<dbReference type="Gene3D" id="2.160.10.10">
    <property type="entry name" value="Hexapeptide repeat proteins"/>
    <property type="match status" value="1"/>
</dbReference>
<dbReference type="Gene3D" id="3.90.550.10">
    <property type="entry name" value="Spore Coat Polysaccharide Biosynthesis Protein SpsA, Chain A"/>
    <property type="match status" value="1"/>
</dbReference>
<dbReference type="HAMAP" id="MF_01631">
    <property type="entry name" value="GlmU"/>
    <property type="match status" value="1"/>
</dbReference>
<dbReference type="InterPro" id="IPR005882">
    <property type="entry name" value="Bifunctional_GlmU"/>
</dbReference>
<dbReference type="InterPro" id="IPR050065">
    <property type="entry name" value="GlmU-like"/>
</dbReference>
<dbReference type="InterPro" id="IPR056818">
    <property type="entry name" value="GlmU/GlgC-like_hexapep"/>
</dbReference>
<dbReference type="InterPro" id="IPR038009">
    <property type="entry name" value="GlmU_C_LbH"/>
</dbReference>
<dbReference type="InterPro" id="IPR001451">
    <property type="entry name" value="Hexapep"/>
</dbReference>
<dbReference type="InterPro" id="IPR005835">
    <property type="entry name" value="NTP_transferase_dom"/>
</dbReference>
<dbReference type="InterPro" id="IPR029044">
    <property type="entry name" value="Nucleotide-diphossugar_trans"/>
</dbReference>
<dbReference type="InterPro" id="IPR011004">
    <property type="entry name" value="Trimer_LpxA-like_sf"/>
</dbReference>
<dbReference type="NCBIfam" id="TIGR01173">
    <property type="entry name" value="glmU"/>
    <property type="match status" value="1"/>
</dbReference>
<dbReference type="NCBIfam" id="NF010934">
    <property type="entry name" value="PRK14354.1"/>
    <property type="match status" value="1"/>
</dbReference>
<dbReference type="PANTHER" id="PTHR43584:SF3">
    <property type="entry name" value="BIFUNCTIONAL PROTEIN GLMU"/>
    <property type="match status" value="1"/>
</dbReference>
<dbReference type="PANTHER" id="PTHR43584">
    <property type="entry name" value="NUCLEOTIDYL TRANSFERASE"/>
    <property type="match status" value="1"/>
</dbReference>
<dbReference type="Pfam" id="PF00132">
    <property type="entry name" value="Hexapep"/>
    <property type="match status" value="1"/>
</dbReference>
<dbReference type="Pfam" id="PF24894">
    <property type="entry name" value="Hexapep_GlmU"/>
    <property type="match status" value="1"/>
</dbReference>
<dbReference type="Pfam" id="PF00483">
    <property type="entry name" value="NTP_transferase"/>
    <property type="match status" value="1"/>
</dbReference>
<dbReference type="SUPFAM" id="SSF53448">
    <property type="entry name" value="Nucleotide-diphospho-sugar transferases"/>
    <property type="match status" value="1"/>
</dbReference>
<dbReference type="SUPFAM" id="SSF51161">
    <property type="entry name" value="Trimeric LpxA-like enzymes"/>
    <property type="match status" value="1"/>
</dbReference>
<evidence type="ECO:0000255" key="1">
    <source>
        <dbReference type="HAMAP-Rule" id="MF_01631"/>
    </source>
</evidence>
<comment type="function">
    <text evidence="1">Catalyzes the last two sequential reactions in the de novo biosynthetic pathway for UDP-N-acetylglucosamine (UDP-GlcNAc). The C-terminal domain catalyzes the transfer of acetyl group from acetyl coenzyme A to glucosamine-1-phosphate (GlcN-1-P) to produce N-acetylglucosamine-1-phosphate (GlcNAc-1-P), which is converted into UDP-GlcNAc by the transfer of uridine 5-monophosphate (from uridine 5-triphosphate), a reaction catalyzed by the N-terminal domain.</text>
</comment>
<comment type="catalytic activity">
    <reaction evidence="1">
        <text>alpha-D-glucosamine 1-phosphate + acetyl-CoA = N-acetyl-alpha-D-glucosamine 1-phosphate + CoA + H(+)</text>
        <dbReference type="Rhea" id="RHEA:13725"/>
        <dbReference type="ChEBI" id="CHEBI:15378"/>
        <dbReference type="ChEBI" id="CHEBI:57287"/>
        <dbReference type="ChEBI" id="CHEBI:57288"/>
        <dbReference type="ChEBI" id="CHEBI:57776"/>
        <dbReference type="ChEBI" id="CHEBI:58516"/>
        <dbReference type="EC" id="2.3.1.157"/>
    </reaction>
</comment>
<comment type="catalytic activity">
    <reaction evidence="1">
        <text>N-acetyl-alpha-D-glucosamine 1-phosphate + UTP + H(+) = UDP-N-acetyl-alpha-D-glucosamine + diphosphate</text>
        <dbReference type="Rhea" id="RHEA:13509"/>
        <dbReference type="ChEBI" id="CHEBI:15378"/>
        <dbReference type="ChEBI" id="CHEBI:33019"/>
        <dbReference type="ChEBI" id="CHEBI:46398"/>
        <dbReference type="ChEBI" id="CHEBI:57705"/>
        <dbReference type="ChEBI" id="CHEBI:57776"/>
        <dbReference type="EC" id="2.7.7.23"/>
    </reaction>
</comment>
<comment type="cofactor">
    <cofactor evidence="1">
        <name>Mg(2+)</name>
        <dbReference type="ChEBI" id="CHEBI:18420"/>
    </cofactor>
    <text evidence="1">Binds 1 Mg(2+) ion per subunit.</text>
</comment>
<comment type="pathway">
    <text evidence="1">Nucleotide-sugar biosynthesis; UDP-N-acetyl-alpha-D-glucosamine biosynthesis; N-acetyl-alpha-D-glucosamine 1-phosphate from alpha-D-glucosamine 6-phosphate (route II): step 2/2.</text>
</comment>
<comment type="pathway">
    <text evidence="1">Nucleotide-sugar biosynthesis; UDP-N-acetyl-alpha-D-glucosamine biosynthesis; UDP-N-acetyl-alpha-D-glucosamine from N-acetyl-alpha-D-glucosamine 1-phosphate: step 1/1.</text>
</comment>
<comment type="pathway">
    <text evidence="1">Bacterial outer membrane biogenesis; LPS lipid A biosynthesis.</text>
</comment>
<comment type="subunit">
    <text evidence="1">Homotrimer.</text>
</comment>
<comment type="subcellular location">
    <subcellularLocation>
        <location evidence="1">Cytoplasm</location>
    </subcellularLocation>
</comment>
<comment type="similarity">
    <text evidence="1">In the N-terminal section; belongs to the N-acetylglucosamine-1-phosphate uridyltransferase family.</text>
</comment>
<comment type="similarity">
    <text evidence="1">In the C-terminal section; belongs to the transferase hexapeptide repeat family.</text>
</comment>
<gene>
    <name evidence="1" type="primary">glmU</name>
    <name type="ordered locus">STER_0603</name>
</gene>
<protein>
    <recommendedName>
        <fullName evidence="1">Bifunctional protein GlmU</fullName>
    </recommendedName>
    <domain>
        <recommendedName>
            <fullName evidence="1">UDP-N-acetylglucosamine pyrophosphorylase</fullName>
            <ecNumber evidence="1">2.7.7.23</ecNumber>
        </recommendedName>
        <alternativeName>
            <fullName evidence="1">N-acetylglucosamine-1-phosphate uridyltransferase</fullName>
        </alternativeName>
    </domain>
    <domain>
        <recommendedName>
            <fullName evidence="1">Glucosamine-1-phosphate N-acetyltransferase</fullName>
            <ecNumber evidence="1">2.3.1.157</ecNumber>
        </recommendedName>
    </domain>
</protein>